<evidence type="ECO:0000255" key="1">
    <source>
        <dbReference type="HAMAP-Rule" id="MF_01315"/>
    </source>
</evidence>
<evidence type="ECO:0000256" key="2">
    <source>
        <dbReference type="SAM" id="MobiDB-lite"/>
    </source>
</evidence>
<evidence type="ECO:0000305" key="3"/>
<comment type="function">
    <text evidence="1">Located at the top of the head of the 30S subunit, it contacts several helices of the 16S rRNA. In the 70S ribosome it contacts the 23S rRNA (bridge B1a) and protein L5 of the 50S subunit (bridge B1b), connecting the 2 subunits; these bridges are implicated in subunit movement. Contacts the tRNAs in the A and P-sites.</text>
</comment>
<comment type="subunit">
    <text evidence="1">Part of the 30S ribosomal subunit. Forms a loose heterodimer with protein S19. Forms two bridges to the 50S subunit in the 70S ribosome.</text>
</comment>
<comment type="similarity">
    <text evidence="1">Belongs to the universal ribosomal protein uS13 family.</text>
</comment>
<proteinExistence type="inferred from homology"/>
<protein>
    <recommendedName>
        <fullName evidence="1">Small ribosomal subunit protein uS13</fullName>
    </recommendedName>
    <alternativeName>
        <fullName evidence="3">30S ribosomal protein S13</fullName>
    </alternativeName>
</protein>
<accession>B7GJ92</accession>
<reference key="1">
    <citation type="journal article" date="2008" name="Genome Biol.">
        <title>Encapsulated in silica: genome, proteome and physiology of the thermophilic bacterium Anoxybacillus flavithermus WK1.</title>
        <authorList>
            <person name="Saw J.H."/>
            <person name="Mountain B.W."/>
            <person name="Feng L."/>
            <person name="Omelchenko M.V."/>
            <person name="Hou S."/>
            <person name="Saito J.A."/>
            <person name="Stott M.B."/>
            <person name="Li D."/>
            <person name="Zhao G."/>
            <person name="Wu J."/>
            <person name="Galperin M.Y."/>
            <person name="Koonin E.V."/>
            <person name="Makarova K.S."/>
            <person name="Wolf Y.I."/>
            <person name="Rigden D.J."/>
            <person name="Dunfield P.F."/>
            <person name="Wang L."/>
            <person name="Alam M."/>
        </authorList>
    </citation>
    <scope>NUCLEOTIDE SEQUENCE [LARGE SCALE GENOMIC DNA]</scope>
    <source>
        <strain>DSM 21510 / WK1</strain>
    </source>
</reference>
<dbReference type="EMBL" id="CP000922">
    <property type="protein sequence ID" value="ACJ32514.1"/>
    <property type="molecule type" value="Genomic_DNA"/>
</dbReference>
<dbReference type="RefSeq" id="WP_003397691.1">
    <property type="nucleotide sequence ID" value="NC_011567.1"/>
</dbReference>
<dbReference type="SMR" id="B7GJ92"/>
<dbReference type="STRING" id="491915.Aflv_0130"/>
<dbReference type="GeneID" id="7036329"/>
<dbReference type="KEGG" id="afl:Aflv_0130"/>
<dbReference type="eggNOG" id="COG0099">
    <property type="taxonomic scope" value="Bacteria"/>
</dbReference>
<dbReference type="HOGENOM" id="CLU_103849_1_1_9"/>
<dbReference type="Proteomes" id="UP000000742">
    <property type="component" value="Chromosome"/>
</dbReference>
<dbReference type="GO" id="GO:0005829">
    <property type="term" value="C:cytosol"/>
    <property type="evidence" value="ECO:0007669"/>
    <property type="project" value="TreeGrafter"/>
</dbReference>
<dbReference type="GO" id="GO:0015935">
    <property type="term" value="C:small ribosomal subunit"/>
    <property type="evidence" value="ECO:0007669"/>
    <property type="project" value="TreeGrafter"/>
</dbReference>
<dbReference type="GO" id="GO:0019843">
    <property type="term" value="F:rRNA binding"/>
    <property type="evidence" value="ECO:0007669"/>
    <property type="project" value="UniProtKB-UniRule"/>
</dbReference>
<dbReference type="GO" id="GO:0003735">
    <property type="term" value="F:structural constituent of ribosome"/>
    <property type="evidence" value="ECO:0007669"/>
    <property type="project" value="InterPro"/>
</dbReference>
<dbReference type="GO" id="GO:0000049">
    <property type="term" value="F:tRNA binding"/>
    <property type="evidence" value="ECO:0007669"/>
    <property type="project" value="UniProtKB-UniRule"/>
</dbReference>
<dbReference type="GO" id="GO:0006412">
    <property type="term" value="P:translation"/>
    <property type="evidence" value="ECO:0007669"/>
    <property type="project" value="UniProtKB-UniRule"/>
</dbReference>
<dbReference type="FunFam" id="1.10.8.50:FF:000001">
    <property type="entry name" value="30S ribosomal protein S13"/>
    <property type="match status" value="1"/>
</dbReference>
<dbReference type="FunFam" id="4.10.910.10:FF:000001">
    <property type="entry name" value="30S ribosomal protein S13"/>
    <property type="match status" value="1"/>
</dbReference>
<dbReference type="Gene3D" id="1.10.8.50">
    <property type="match status" value="1"/>
</dbReference>
<dbReference type="Gene3D" id="4.10.910.10">
    <property type="entry name" value="30s ribosomal protein s13, domain 2"/>
    <property type="match status" value="1"/>
</dbReference>
<dbReference type="HAMAP" id="MF_01315">
    <property type="entry name" value="Ribosomal_uS13"/>
    <property type="match status" value="1"/>
</dbReference>
<dbReference type="InterPro" id="IPR027437">
    <property type="entry name" value="Rbsml_uS13_C"/>
</dbReference>
<dbReference type="InterPro" id="IPR001892">
    <property type="entry name" value="Ribosomal_uS13"/>
</dbReference>
<dbReference type="InterPro" id="IPR010979">
    <property type="entry name" value="Ribosomal_uS13-like_H2TH"/>
</dbReference>
<dbReference type="InterPro" id="IPR019980">
    <property type="entry name" value="Ribosomal_uS13_bac-type"/>
</dbReference>
<dbReference type="InterPro" id="IPR018269">
    <property type="entry name" value="Ribosomal_uS13_CS"/>
</dbReference>
<dbReference type="NCBIfam" id="TIGR03631">
    <property type="entry name" value="uS13_bact"/>
    <property type="match status" value="1"/>
</dbReference>
<dbReference type="PANTHER" id="PTHR10871">
    <property type="entry name" value="30S RIBOSOMAL PROTEIN S13/40S RIBOSOMAL PROTEIN S18"/>
    <property type="match status" value="1"/>
</dbReference>
<dbReference type="PANTHER" id="PTHR10871:SF1">
    <property type="entry name" value="SMALL RIBOSOMAL SUBUNIT PROTEIN US13M"/>
    <property type="match status" value="1"/>
</dbReference>
<dbReference type="Pfam" id="PF00416">
    <property type="entry name" value="Ribosomal_S13"/>
    <property type="match status" value="1"/>
</dbReference>
<dbReference type="PIRSF" id="PIRSF002134">
    <property type="entry name" value="Ribosomal_S13"/>
    <property type="match status" value="1"/>
</dbReference>
<dbReference type="SUPFAM" id="SSF46946">
    <property type="entry name" value="S13-like H2TH domain"/>
    <property type="match status" value="1"/>
</dbReference>
<dbReference type="PROSITE" id="PS00646">
    <property type="entry name" value="RIBOSOMAL_S13_1"/>
    <property type="match status" value="1"/>
</dbReference>
<dbReference type="PROSITE" id="PS50159">
    <property type="entry name" value="RIBOSOMAL_S13_2"/>
    <property type="match status" value="1"/>
</dbReference>
<keyword id="KW-0687">Ribonucleoprotein</keyword>
<keyword id="KW-0689">Ribosomal protein</keyword>
<keyword id="KW-0694">RNA-binding</keyword>
<keyword id="KW-0699">rRNA-binding</keyword>
<keyword id="KW-0820">tRNA-binding</keyword>
<gene>
    <name evidence="1" type="primary">rpsM</name>
    <name type="ordered locus">Aflv_0130</name>
</gene>
<organism>
    <name type="scientific">Anoxybacillus flavithermus (strain DSM 21510 / WK1)</name>
    <dbReference type="NCBI Taxonomy" id="491915"/>
    <lineage>
        <taxon>Bacteria</taxon>
        <taxon>Bacillati</taxon>
        <taxon>Bacillota</taxon>
        <taxon>Bacilli</taxon>
        <taxon>Bacillales</taxon>
        <taxon>Anoxybacillaceae</taxon>
        <taxon>Anoxybacillus</taxon>
    </lineage>
</organism>
<feature type="chain" id="PRO_1000141214" description="Small ribosomal subunit protein uS13">
    <location>
        <begin position="1"/>
        <end position="121"/>
    </location>
</feature>
<feature type="region of interest" description="Disordered" evidence="2">
    <location>
        <begin position="94"/>
        <end position="121"/>
    </location>
</feature>
<feature type="compositionally biased region" description="Basic residues" evidence="2">
    <location>
        <begin position="106"/>
        <end position="121"/>
    </location>
</feature>
<sequence>MARIAGVDIPRDKRVVISLTYIYGIGKATAQKILAEAGVSEDTRVRDLTEEELGKIREIVDRLKVEGDLRREVSLNIKRLMEIGCYRGLRHRRGLPVRGQNTKNNARTRKGPRRTVANKKK</sequence>
<name>RS13_ANOFW</name>